<protein>
    <recommendedName>
        <fullName>Phthalate 4,5-dioxygenase oxygenase reductase subunit</fullName>
        <ecNumber>1.14.12.7</ecNumber>
    </recommendedName>
</protein>
<geneLocation type="plasmid">
    <name>PHT</name>
</geneLocation>
<dbReference type="EC" id="1.14.12.7"/>
<dbReference type="EMBL" id="D13229">
    <property type="protein sequence ID" value="BAA02510.1"/>
    <property type="molecule type" value="Genomic_DNA"/>
</dbReference>
<dbReference type="RefSeq" id="WP_060765958.1">
    <property type="nucleotide sequence ID" value="NZ_JAJSRK010000027.1"/>
</dbReference>
<dbReference type="SMR" id="Q05182"/>
<dbReference type="KEGG" id="ag:BAA02510"/>
<dbReference type="UniPathway" id="UPA00726">
    <property type="reaction ID" value="UER00728"/>
</dbReference>
<dbReference type="GO" id="GO:0051537">
    <property type="term" value="F:2 iron, 2 sulfur cluster binding"/>
    <property type="evidence" value="ECO:0007669"/>
    <property type="project" value="UniProtKB-KW"/>
</dbReference>
<dbReference type="GO" id="GO:0046872">
    <property type="term" value="F:metal ion binding"/>
    <property type="evidence" value="ECO:0007669"/>
    <property type="project" value="UniProtKB-KW"/>
</dbReference>
<dbReference type="GO" id="GO:0004497">
    <property type="term" value="F:monooxygenase activity"/>
    <property type="evidence" value="ECO:0007669"/>
    <property type="project" value="UniProtKB-KW"/>
</dbReference>
<dbReference type="GO" id="GO:0018620">
    <property type="term" value="F:phthalate 4,5-dioxygenase activity"/>
    <property type="evidence" value="ECO:0007669"/>
    <property type="project" value="UniProtKB-EC"/>
</dbReference>
<dbReference type="GO" id="GO:0046239">
    <property type="term" value="P:phthalate catabolic process"/>
    <property type="evidence" value="ECO:0007669"/>
    <property type="project" value="UniProtKB-UniPathway"/>
</dbReference>
<dbReference type="CDD" id="cd00207">
    <property type="entry name" value="fer2"/>
    <property type="match status" value="1"/>
</dbReference>
<dbReference type="CDD" id="cd06185">
    <property type="entry name" value="PDR_like"/>
    <property type="match status" value="1"/>
</dbReference>
<dbReference type="Gene3D" id="3.10.20.30">
    <property type="match status" value="1"/>
</dbReference>
<dbReference type="Gene3D" id="3.40.50.80">
    <property type="entry name" value="Nucleotide-binding domain of ferredoxin-NADP reductase (FNR) module"/>
    <property type="match status" value="1"/>
</dbReference>
<dbReference type="Gene3D" id="2.40.30.10">
    <property type="entry name" value="Translation factors"/>
    <property type="match status" value="1"/>
</dbReference>
<dbReference type="InterPro" id="IPR036010">
    <property type="entry name" value="2Fe-2S_ferredoxin-like_sf"/>
</dbReference>
<dbReference type="InterPro" id="IPR001041">
    <property type="entry name" value="2Fe-2S_ferredoxin-type"/>
</dbReference>
<dbReference type="InterPro" id="IPR006058">
    <property type="entry name" value="2Fe2S_fd_BS"/>
</dbReference>
<dbReference type="InterPro" id="IPR012675">
    <property type="entry name" value="Beta-grasp_dom_sf"/>
</dbReference>
<dbReference type="InterPro" id="IPR008333">
    <property type="entry name" value="Cbr1-like_FAD-bd_dom"/>
</dbReference>
<dbReference type="InterPro" id="IPR017927">
    <property type="entry name" value="FAD-bd_FR_type"/>
</dbReference>
<dbReference type="InterPro" id="IPR039261">
    <property type="entry name" value="FNR_nucleotide-bd"/>
</dbReference>
<dbReference type="InterPro" id="IPR050415">
    <property type="entry name" value="MRET"/>
</dbReference>
<dbReference type="InterPro" id="IPR001433">
    <property type="entry name" value="OxRdtase_FAD/NAD-bd"/>
</dbReference>
<dbReference type="InterPro" id="IPR017938">
    <property type="entry name" value="Riboflavin_synthase-like_b-brl"/>
</dbReference>
<dbReference type="PANTHER" id="PTHR47354:SF1">
    <property type="entry name" value="CARNITINE MONOOXYGENASE REDUCTASE SUBUNIT"/>
    <property type="match status" value="1"/>
</dbReference>
<dbReference type="PANTHER" id="PTHR47354">
    <property type="entry name" value="NADH OXIDOREDUCTASE HCR"/>
    <property type="match status" value="1"/>
</dbReference>
<dbReference type="Pfam" id="PF00970">
    <property type="entry name" value="FAD_binding_6"/>
    <property type="match status" value="1"/>
</dbReference>
<dbReference type="Pfam" id="PF00111">
    <property type="entry name" value="Fer2"/>
    <property type="match status" value="1"/>
</dbReference>
<dbReference type="Pfam" id="PF00175">
    <property type="entry name" value="NAD_binding_1"/>
    <property type="match status" value="1"/>
</dbReference>
<dbReference type="PRINTS" id="PR00409">
    <property type="entry name" value="PHDIOXRDTASE"/>
</dbReference>
<dbReference type="SUPFAM" id="SSF54292">
    <property type="entry name" value="2Fe-2S ferredoxin-like"/>
    <property type="match status" value="1"/>
</dbReference>
<dbReference type="SUPFAM" id="SSF52343">
    <property type="entry name" value="Ferredoxin reductase-like, C-terminal NADP-linked domain"/>
    <property type="match status" value="1"/>
</dbReference>
<dbReference type="SUPFAM" id="SSF63380">
    <property type="entry name" value="Riboflavin synthase domain-like"/>
    <property type="match status" value="1"/>
</dbReference>
<dbReference type="PROSITE" id="PS00197">
    <property type="entry name" value="2FE2S_FER_1"/>
    <property type="match status" value="1"/>
</dbReference>
<dbReference type="PROSITE" id="PS51085">
    <property type="entry name" value="2FE2S_FER_2"/>
    <property type="match status" value="1"/>
</dbReference>
<dbReference type="PROSITE" id="PS51384">
    <property type="entry name" value="FAD_FR"/>
    <property type="match status" value="1"/>
</dbReference>
<evidence type="ECO:0000250" key="1"/>
<evidence type="ECO:0000255" key="2">
    <source>
        <dbReference type="PROSITE-ProRule" id="PRU00465"/>
    </source>
</evidence>
<evidence type="ECO:0000255" key="3">
    <source>
        <dbReference type="PROSITE-ProRule" id="PRU00716"/>
    </source>
</evidence>
<evidence type="ECO:0000305" key="4"/>
<proteinExistence type="evidence at transcript level"/>
<keyword id="KW-0001">2Fe-2S</keyword>
<keyword id="KW-0058">Aromatic hydrocarbons catabolism</keyword>
<keyword id="KW-0249">Electron transport</keyword>
<keyword id="KW-0285">Flavoprotein</keyword>
<keyword id="KW-0288">FMN</keyword>
<keyword id="KW-0408">Iron</keyword>
<keyword id="KW-0411">Iron-sulfur</keyword>
<keyword id="KW-0479">Metal-binding</keyword>
<keyword id="KW-0503">Monooxygenase</keyword>
<keyword id="KW-0520">NAD</keyword>
<keyword id="KW-0560">Oxidoreductase</keyword>
<keyword id="KW-0614">Plasmid</keyword>
<keyword id="KW-0813">Transport</keyword>
<comment type="catalytic activity">
    <reaction>
        <text>phthalate + NADH + O2 + H(+) = cis-4,5-dihydroxycyclohexa-2,6-diene-1,2-dicarboxylate + NAD(+)</text>
        <dbReference type="Rhea" id="RHEA:17489"/>
        <dbReference type="ChEBI" id="CHEBI:15378"/>
        <dbReference type="ChEBI" id="CHEBI:15379"/>
        <dbReference type="ChEBI" id="CHEBI:17563"/>
        <dbReference type="ChEBI" id="CHEBI:57540"/>
        <dbReference type="ChEBI" id="CHEBI:57945"/>
        <dbReference type="ChEBI" id="CHEBI:58237"/>
        <dbReference type="EC" id="1.14.12.7"/>
    </reaction>
</comment>
<comment type="cofactor">
    <cofactor evidence="1">
        <name>FMN</name>
        <dbReference type="ChEBI" id="CHEBI:58210"/>
    </cofactor>
</comment>
<comment type="pathway">
    <text>Xenobiotic degradation; phthalate degradation; 3,4-dihydroxybenzoate from phthalate: step 1/3.</text>
</comment>
<comment type="subunit">
    <text>This dioxygenase system consists of two proteins: phthalate oxygenase and phthalate oxygenase reductase.</text>
</comment>
<comment type="induction">
    <text>Induced by phthalate and repressed by glucose.</text>
</comment>
<comment type="similarity">
    <text evidence="4">Belongs to the PDR/VanB family.</text>
</comment>
<sequence>MSSSEQLDDGFTGLKVIAKTEIAQGIFRFELAHPQGMLLPAFTAGAHLRVRVPNGSIRNYSLSNDPQERERYVIAVKRDANGRGGSVSMADDIEAGDLLPVATPQNEFELIENARQFIFVAGGIGITPILSMMRHLKASTDLPFKLYYCTRNPELTAFRDELLGAEFANTVVIHHDFGNRADAYDFWPVFDKPSSGTHVYCCGPRPLMDSVLDMTGHWPPGSIHFESFGVDQSRFAENRPFSVTLGRSGIDLEIPVDRSILEVLRDNGIRAPSSCESGTCGSCRTRLIEGDVEHRDMVLREDEQHDQIMICVSRARNDVLVLDL</sequence>
<name>PHT2_PSEPU</name>
<organism>
    <name type="scientific">Pseudomonas putida</name>
    <name type="common">Arthrobacter siderocapsulatus</name>
    <dbReference type="NCBI Taxonomy" id="303"/>
    <lineage>
        <taxon>Bacteria</taxon>
        <taxon>Pseudomonadati</taxon>
        <taxon>Pseudomonadota</taxon>
        <taxon>Gammaproteobacteria</taxon>
        <taxon>Pseudomonadales</taxon>
        <taxon>Pseudomonadaceae</taxon>
        <taxon>Pseudomonas</taxon>
    </lineage>
</organism>
<reference key="1">
    <citation type="journal article" date="1992" name="J. Ferment. Bioeng.">
        <title>Genes in PHT plasmid encoding the initial degradation pathway of phthalate in Pseudomonas putida.</title>
        <authorList>
            <person name="Nomura Y."/>
            <person name="Nakagawa M."/>
            <person name="Ogawa N."/>
            <person name="Harashima S."/>
            <person name="Oshima Y."/>
        </authorList>
    </citation>
    <scope>NUCLEOTIDE SEQUENCE [GENOMIC DNA]</scope>
    <source>
        <strain>NMH102-2</strain>
    </source>
</reference>
<gene>
    <name type="primary">pht2</name>
</gene>
<feature type="chain" id="PRO_0000189400" description="Phthalate 4,5-dioxygenase oxygenase reductase subunit">
    <location>
        <begin position="1"/>
        <end position="324"/>
    </location>
</feature>
<feature type="domain" description="FAD-binding FR-type" evidence="3">
    <location>
        <begin position="9"/>
        <end position="111"/>
    </location>
</feature>
<feature type="domain" description="2Fe-2S ferredoxin-type" evidence="2">
    <location>
        <begin position="241"/>
        <end position="324"/>
    </location>
</feature>
<feature type="binding site" evidence="1">
    <location>
        <begin position="115"/>
        <end position="229"/>
    </location>
    <ligand>
        <name>NAD(+)</name>
        <dbReference type="ChEBI" id="CHEBI:57540"/>
    </ligand>
</feature>
<feature type="binding site" evidence="2">
    <location>
        <position position="275"/>
    </location>
    <ligand>
        <name>[2Fe-2S] cluster</name>
        <dbReference type="ChEBI" id="CHEBI:190135"/>
    </ligand>
</feature>
<feature type="binding site" evidence="2">
    <location>
        <position position="280"/>
    </location>
    <ligand>
        <name>[2Fe-2S] cluster</name>
        <dbReference type="ChEBI" id="CHEBI:190135"/>
    </ligand>
</feature>
<feature type="binding site" evidence="2">
    <location>
        <position position="283"/>
    </location>
    <ligand>
        <name>[2Fe-2S] cluster</name>
        <dbReference type="ChEBI" id="CHEBI:190135"/>
    </ligand>
</feature>
<feature type="binding site" evidence="2">
    <location>
        <position position="311"/>
    </location>
    <ligand>
        <name>[2Fe-2S] cluster</name>
        <dbReference type="ChEBI" id="CHEBI:190135"/>
    </ligand>
</feature>
<accession>Q05182</accession>